<organism>
    <name type="scientific">Rattus norvegicus</name>
    <name type="common">Rat</name>
    <dbReference type="NCBI Taxonomy" id="10116"/>
    <lineage>
        <taxon>Eukaryota</taxon>
        <taxon>Metazoa</taxon>
        <taxon>Chordata</taxon>
        <taxon>Craniata</taxon>
        <taxon>Vertebrata</taxon>
        <taxon>Euteleostomi</taxon>
        <taxon>Mammalia</taxon>
        <taxon>Eutheria</taxon>
        <taxon>Euarchontoglires</taxon>
        <taxon>Glires</taxon>
        <taxon>Rodentia</taxon>
        <taxon>Myomorpha</taxon>
        <taxon>Muroidea</taxon>
        <taxon>Muridae</taxon>
        <taxon>Murinae</taxon>
        <taxon>Rattus</taxon>
    </lineage>
</organism>
<dbReference type="EC" id="3.6.1.-"/>
<dbReference type="EC" id="3.6.1.77" evidence="1"/>
<dbReference type="EMBL" id="BC079088">
    <property type="protein sequence ID" value="AAH79088.1"/>
    <property type="molecule type" value="mRNA"/>
</dbReference>
<dbReference type="RefSeq" id="NP_001004258.1">
    <property type="nucleotide sequence ID" value="NM_001004258.1"/>
</dbReference>
<dbReference type="RefSeq" id="XP_008757383.1">
    <property type="nucleotide sequence ID" value="XM_008759161.2"/>
</dbReference>
<dbReference type="SMR" id="Q6AYD9"/>
<dbReference type="FunCoup" id="Q6AYD9">
    <property type="interactions" value="240"/>
</dbReference>
<dbReference type="STRING" id="10116.ENSRNOP00000075267"/>
<dbReference type="PhosphoSitePlus" id="Q6AYD9"/>
<dbReference type="jPOST" id="Q6AYD9"/>
<dbReference type="PaxDb" id="10116-ENSRNOP00000017153"/>
<dbReference type="Ensembl" id="ENSRNOT00000079088.2">
    <property type="protein sequence ID" value="ENSRNOP00000075267.1"/>
    <property type="gene ID" value="ENSRNOG00000059386.2"/>
</dbReference>
<dbReference type="GeneID" id="308518"/>
<dbReference type="KEGG" id="rno:308518"/>
<dbReference type="UCSC" id="RGD:1302935">
    <property type="organism name" value="rat"/>
</dbReference>
<dbReference type="AGR" id="RGD:1302935"/>
<dbReference type="CTD" id="390916"/>
<dbReference type="RGD" id="1302935">
    <property type="gene designation" value="Nudt19"/>
</dbReference>
<dbReference type="eggNOG" id="KOG3904">
    <property type="taxonomic scope" value="Eukaryota"/>
</dbReference>
<dbReference type="GeneTree" id="ENSGT00420000029858"/>
<dbReference type="HOGENOM" id="CLU_059078_1_0_1"/>
<dbReference type="InParanoid" id="Q6AYD9"/>
<dbReference type="OMA" id="GFMPSAH"/>
<dbReference type="OrthoDB" id="1695362at2759"/>
<dbReference type="PhylomeDB" id="Q6AYD9"/>
<dbReference type="TreeFam" id="TF313185"/>
<dbReference type="Reactome" id="R-RNO-390918">
    <property type="pathway name" value="Peroxisomal lipid metabolism"/>
</dbReference>
<dbReference type="Reactome" id="R-RNO-9033241">
    <property type="pathway name" value="Peroxisomal protein import"/>
</dbReference>
<dbReference type="PRO" id="PR:Q6AYD9"/>
<dbReference type="Proteomes" id="UP000002494">
    <property type="component" value="Chromosome 1"/>
</dbReference>
<dbReference type="Bgee" id="ENSRNOG00000059386">
    <property type="expression patterns" value="Expressed in heart and 20 other cell types or tissues"/>
</dbReference>
<dbReference type="GO" id="GO:0005777">
    <property type="term" value="C:peroxisome"/>
    <property type="evidence" value="ECO:0007669"/>
    <property type="project" value="UniProtKB-SubCell"/>
</dbReference>
<dbReference type="GO" id="GO:0010945">
    <property type="term" value="F:coenzyme A diphosphatase activity"/>
    <property type="evidence" value="ECO:0007669"/>
    <property type="project" value="RHEA"/>
</dbReference>
<dbReference type="GO" id="GO:0000287">
    <property type="term" value="F:magnesium ion binding"/>
    <property type="evidence" value="ECO:0000250"/>
    <property type="project" value="UniProtKB"/>
</dbReference>
<dbReference type="GO" id="GO:0044580">
    <property type="term" value="P:butyryl-CoA catabolic process"/>
    <property type="evidence" value="ECO:0000250"/>
    <property type="project" value="UniProtKB"/>
</dbReference>
<dbReference type="GO" id="GO:0015938">
    <property type="term" value="P:coenzyme A catabolic process"/>
    <property type="evidence" value="ECO:0000250"/>
    <property type="project" value="UniProtKB"/>
</dbReference>
<dbReference type="GO" id="GO:2001294">
    <property type="term" value="P:malonyl-CoA catabolic process"/>
    <property type="evidence" value="ECO:0000250"/>
    <property type="project" value="UniProtKB"/>
</dbReference>
<dbReference type="GO" id="GO:0036114">
    <property type="term" value="P:medium-chain fatty-acyl-CoA catabolic process"/>
    <property type="evidence" value="ECO:0000250"/>
    <property type="project" value="UniProtKB"/>
</dbReference>
<dbReference type="GO" id="GO:1902858">
    <property type="term" value="P:propionyl-CoA metabolic process"/>
    <property type="evidence" value="ECO:0000250"/>
    <property type="project" value="UniProtKB"/>
</dbReference>
<dbReference type="GO" id="GO:1901289">
    <property type="term" value="P:succinyl-CoA catabolic process"/>
    <property type="evidence" value="ECO:0000250"/>
    <property type="project" value="UniProtKB"/>
</dbReference>
<dbReference type="CDD" id="cd18870">
    <property type="entry name" value="NUDIX_AcylCoAdiphos_Nudt19"/>
    <property type="match status" value="1"/>
</dbReference>
<dbReference type="FunFam" id="3.90.79.10:FF:000072">
    <property type="entry name" value="Nucleoside diphosphate-linked moiety X motif 19"/>
    <property type="match status" value="1"/>
</dbReference>
<dbReference type="Gene3D" id="3.90.79.10">
    <property type="entry name" value="Nucleoside Triphosphate Pyrophosphohydrolase"/>
    <property type="match status" value="1"/>
</dbReference>
<dbReference type="InterPro" id="IPR015797">
    <property type="entry name" value="NUDIX_hydrolase-like_dom_sf"/>
</dbReference>
<dbReference type="InterPro" id="IPR000086">
    <property type="entry name" value="NUDIX_hydrolase_dom"/>
</dbReference>
<dbReference type="InterPro" id="IPR039121">
    <property type="entry name" value="NUDT19"/>
</dbReference>
<dbReference type="PANTHER" id="PTHR12318:SF0">
    <property type="entry name" value="ACYL-COENZYME A DIPHOSPHATASE NUDT19"/>
    <property type="match status" value="1"/>
</dbReference>
<dbReference type="PANTHER" id="PTHR12318">
    <property type="entry name" value="TESTOSTERONE-REGULATED PROTEIN RP2"/>
    <property type="match status" value="1"/>
</dbReference>
<dbReference type="SUPFAM" id="SSF55811">
    <property type="entry name" value="Nudix"/>
    <property type="match status" value="1"/>
</dbReference>
<dbReference type="PROSITE" id="PS51462">
    <property type="entry name" value="NUDIX"/>
    <property type="match status" value="1"/>
</dbReference>
<gene>
    <name type="primary">Nudt19</name>
</gene>
<evidence type="ECO:0000250" key="1">
    <source>
        <dbReference type="UniProtKB" id="P11930"/>
    </source>
</evidence>
<evidence type="ECO:0000255" key="2"/>
<evidence type="ECO:0000255" key="3">
    <source>
        <dbReference type="PROSITE-ProRule" id="PRU00794"/>
    </source>
</evidence>
<evidence type="ECO:0000305" key="4"/>
<name>NUD19_RAT</name>
<proteinExistence type="evidence at transcript level"/>
<keyword id="KW-0378">Hydrolase</keyword>
<keyword id="KW-0460">Magnesium</keyword>
<keyword id="KW-0464">Manganese</keyword>
<keyword id="KW-0479">Metal-binding</keyword>
<keyword id="KW-0576">Peroxisome</keyword>
<keyword id="KW-1185">Reference proteome</keyword>
<reference key="1">
    <citation type="journal article" date="2004" name="Genome Res.">
        <title>The status, quality, and expansion of the NIH full-length cDNA project: the Mammalian Gene Collection (MGC).</title>
        <authorList>
            <consortium name="The MGC Project Team"/>
        </authorList>
    </citation>
    <scope>NUCLEOTIDE SEQUENCE [LARGE SCALE MRNA]</scope>
    <source>
        <tissue>Lung</tissue>
    </source>
</reference>
<feature type="chain" id="PRO_0000324574" description="Acyl-coenzyme A diphosphatase NUDT19">
    <location>
        <begin position="1"/>
        <end position="357"/>
    </location>
</feature>
<feature type="domain" description="Nudix hydrolase" evidence="3">
    <location>
        <begin position="10"/>
        <end position="242"/>
    </location>
</feature>
<feature type="short sequence motif" description="Nudix box">
    <location>
        <begin position="97"/>
        <end position="118"/>
    </location>
</feature>
<feature type="short sequence motif" description="Microbody targeting signal" evidence="2">
    <location>
        <begin position="355"/>
        <end position="357"/>
    </location>
</feature>
<feature type="binding site" evidence="1">
    <location>
        <position position="112"/>
    </location>
    <ligand>
        <name>Mg(2+)</name>
        <dbReference type="ChEBI" id="CHEBI:18420"/>
    </ligand>
</feature>
<feature type="binding site" evidence="1">
    <location>
        <position position="116"/>
    </location>
    <ligand>
        <name>Mg(2+)</name>
        <dbReference type="ChEBI" id="CHEBI:18420"/>
    </ligand>
</feature>
<feature type="site" description="Important for coenzyme A binding" evidence="1">
    <location>
        <position position="34"/>
    </location>
</feature>
<feature type="site" description="Important for coenzyme A binding" evidence="1">
    <location>
        <position position="40"/>
    </location>
</feature>
<feature type="site" description="Important for coenzyme A binding" evidence="1">
    <location>
        <position position="189"/>
    </location>
</feature>
<feature type="modified residue" description="N6-succinyllysine" evidence="1">
    <location>
        <position position="300"/>
    </location>
</feature>
<comment type="function">
    <text evidence="1">Fatty acyl-coenzyme A (CoA) diphosphatase that hydrolyzes fatty acyl-CoA to yield acyl-4'-phosphopantetheine and adenosine 3',5'-bisphosphate (By similarity). Mediates the hydrolysis of a wide range of CoA esters, including choloyl-CoA and branched-chain fatty-acyl-CoA esters and at low substrate concentrations medium and long-chain fatty-acyl-CoA esters are the primary substrates (By similarity). Highest activity seen with medium-chain acyl-CoA esters and higher rates of activity seen with the unsaturated acyl-CoA esters compared with the saturated esters (By similarity). Exhibits decapping activity towards dpCoA-capped RNAs in vitro (By similarity).</text>
</comment>
<comment type="catalytic activity">
    <reaction evidence="1">
        <text>an acyl-CoA + H2O = an acyl-4'-phosphopantetheine + adenosine 3',5'-bisphosphate + 2 H(+)</text>
        <dbReference type="Rhea" id="RHEA:50044"/>
        <dbReference type="ChEBI" id="CHEBI:15377"/>
        <dbReference type="ChEBI" id="CHEBI:15378"/>
        <dbReference type="ChEBI" id="CHEBI:58342"/>
        <dbReference type="ChEBI" id="CHEBI:58343"/>
        <dbReference type="ChEBI" id="CHEBI:132023"/>
    </reaction>
    <physiologicalReaction direction="left-to-right" evidence="1">
        <dbReference type="Rhea" id="RHEA:50045"/>
    </physiologicalReaction>
</comment>
<comment type="catalytic activity">
    <reaction evidence="1">
        <text>CoA + H2O = (R)-4'-phosphopantetheine + adenosine 3',5'-bisphosphate + 2 H(+)</text>
        <dbReference type="Rhea" id="RHEA:64988"/>
        <dbReference type="ChEBI" id="CHEBI:15377"/>
        <dbReference type="ChEBI" id="CHEBI:15378"/>
        <dbReference type="ChEBI" id="CHEBI:57287"/>
        <dbReference type="ChEBI" id="CHEBI:58343"/>
        <dbReference type="ChEBI" id="CHEBI:61723"/>
        <dbReference type="EC" id="3.6.1.77"/>
    </reaction>
    <physiologicalReaction direction="left-to-right" evidence="1">
        <dbReference type="Rhea" id="RHEA:64989"/>
    </physiologicalReaction>
</comment>
<comment type="catalytic activity">
    <reaction evidence="1">
        <text>hexanoyl-CoA + H2O = hexanoyl-4'-phosphopantetheine + adenosine 3',5'-bisphosphate + 2 H(+)</text>
        <dbReference type="Rhea" id="RHEA:49980"/>
        <dbReference type="ChEBI" id="CHEBI:15377"/>
        <dbReference type="ChEBI" id="CHEBI:15378"/>
        <dbReference type="ChEBI" id="CHEBI:58343"/>
        <dbReference type="ChEBI" id="CHEBI:62620"/>
        <dbReference type="ChEBI" id="CHEBI:132012"/>
    </reaction>
    <physiologicalReaction direction="left-to-right" evidence="1">
        <dbReference type="Rhea" id="RHEA:49981"/>
    </physiologicalReaction>
</comment>
<comment type="catalytic activity">
    <reaction evidence="1">
        <text>octanoyl-CoA + H2O = S-octanoyl-4'-phosphopantetheine + adenosine 3',5'-bisphosphate + 2 H(+)</text>
        <dbReference type="Rhea" id="RHEA:50016"/>
        <dbReference type="ChEBI" id="CHEBI:15377"/>
        <dbReference type="ChEBI" id="CHEBI:15378"/>
        <dbReference type="ChEBI" id="CHEBI:57386"/>
        <dbReference type="ChEBI" id="CHEBI:58343"/>
        <dbReference type="ChEBI" id="CHEBI:132013"/>
    </reaction>
    <physiologicalReaction direction="left-to-right" evidence="1">
        <dbReference type="Rhea" id="RHEA:50017"/>
    </physiologicalReaction>
</comment>
<comment type="catalytic activity">
    <reaction evidence="1">
        <text>butanoyl-CoA + H2O = S-butanoyl-4'-phosphopantetheine + adenosine 3',5'-bisphosphate + 2 H(+)</text>
        <dbReference type="Rhea" id="RHEA:49976"/>
        <dbReference type="ChEBI" id="CHEBI:15377"/>
        <dbReference type="ChEBI" id="CHEBI:15378"/>
        <dbReference type="ChEBI" id="CHEBI:57371"/>
        <dbReference type="ChEBI" id="CHEBI:58343"/>
        <dbReference type="ChEBI" id="CHEBI:132011"/>
    </reaction>
    <physiologicalReaction direction="left-to-right" evidence="1">
        <dbReference type="Rhea" id="RHEA:49977"/>
    </physiologicalReaction>
</comment>
<comment type="catalytic activity">
    <reaction evidence="1">
        <text>propanoyl-CoA + H2O = propanoyl-4'-phosphopantetheine + adenosine 3',5'-bisphosphate + 2 H(+)</text>
        <dbReference type="Rhea" id="RHEA:67464"/>
        <dbReference type="ChEBI" id="CHEBI:15377"/>
        <dbReference type="ChEBI" id="CHEBI:15378"/>
        <dbReference type="ChEBI" id="CHEBI:57392"/>
        <dbReference type="ChEBI" id="CHEBI:58343"/>
        <dbReference type="ChEBI" id="CHEBI:172362"/>
    </reaction>
    <physiologicalReaction direction="left-to-right" evidence="1">
        <dbReference type="Rhea" id="RHEA:67465"/>
    </physiologicalReaction>
</comment>
<comment type="catalytic activity">
    <reaction evidence="1">
        <text>malonyl-CoA + H2O = malonyl-4'-phosphopantetheine + adenosine 3',5'-bisphosphate + 2 H(+)</text>
        <dbReference type="Rhea" id="RHEA:67468"/>
        <dbReference type="ChEBI" id="CHEBI:15377"/>
        <dbReference type="ChEBI" id="CHEBI:15378"/>
        <dbReference type="ChEBI" id="CHEBI:57384"/>
        <dbReference type="ChEBI" id="CHEBI:58343"/>
        <dbReference type="ChEBI" id="CHEBI:172363"/>
    </reaction>
    <physiologicalReaction direction="left-to-right" evidence="1">
        <dbReference type="Rhea" id="RHEA:67469"/>
    </physiologicalReaction>
</comment>
<comment type="catalytic activity">
    <reaction evidence="1">
        <text>succinyl-CoA + H2O = succinyl-4'-phosphopantetheine + adenosine 3',5'-bisphosphate + 2 H(+)</text>
        <dbReference type="Rhea" id="RHEA:67472"/>
        <dbReference type="ChEBI" id="CHEBI:15377"/>
        <dbReference type="ChEBI" id="CHEBI:15378"/>
        <dbReference type="ChEBI" id="CHEBI:57292"/>
        <dbReference type="ChEBI" id="CHEBI:58343"/>
        <dbReference type="ChEBI" id="CHEBI:172364"/>
    </reaction>
    <physiologicalReaction direction="left-to-right" evidence="1">
        <dbReference type="Rhea" id="RHEA:67473"/>
    </physiologicalReaction>
</comment>
<comment type="catalytic activity">
    <reaction evidence="1">
        <text>choloyl-CoA + H2O = S-choloyl-4'-phosphopantetheine + adenosine 3',5'-bisphosphate + 2 H(+)</text>
        <dbReference type="Rhea" id="RHEA:50036"/>
        <dbReference type="ChEBI" id="CHEBI:15377"/>
        <dbReference type="ChEBI" id="CHEBI:15378"/>
        <dbReference type="ChEBI" id="CHEBI:57373"/>
        <dbReference type="ChEBI" id="CHEBI:58343"/>
        <dbReference type="ChEBI" id="CHEBI:132020"/>
    </reaction>
    <physiologicalReaction direction="left-to-right" evidence="1">
        <dbReference type="Rhea" id="RHEA:50037"/>
    </physiologicalReaction>
</comment>
<comment type="catalytic activity">
    <reaction evidence="1">
        <text>4,8-dimethylnonanoyl-CoA + H2O = S-(4,8-dimethylnonanoyl)-4'-phosphopantetheine + adenosine 3',5'-bisphosphate + 2 H(+)</text>
        <dbReference type="Rhea" id="RHEA:67524"/>
        <dbReference type="ChEBI" id="CHEBI:15377"/>
        <dbReference type="ChEBI" id="CHEBI:15378"/>
        <dbReference type="ChEBI" id="CHEBI:58343"/>
        <dbReference type="ChEBI" id="CHEBI:77061"/>
        <dbReference type="ChEBI" id="CHEBI:172385"/>
    </reaction>
    <physiologicalReaction direction="left-to-right" evidence="1">
        <dbReference type="Rhea" id="RHEA:67525"/>
    </physiologicalReaction>
</comment>
<comment type="catalytic activity">
    <reaction evidence="1">
        <text>(9Z,12Z,15Z)-octadecatrienoyl-CoA + H2O = S-(9Z,12Z,15Z-octadecatrienoyl)-4'-phosphopantetheine + adenosine 3',5'-bisphosphate + 2 H(+)</text>
        <dbReference type="Rhea" id="RHEA:67532"/>
        <dbReference type="ChEBI" id="CHEBI:15377"/>
        <dbReference type="ChEBI" id="CHEBI:15378"/>
        <dbReference type="ChEBI" id="CHEBI:58343"/>
        <dbReference type="ChEBI" id="CHEBI:74034"/>
        <dbReference type="ChEBI" id="CHEBI:172386"/>
    </reaction>
    <physiologicalReaction direction="left-to-right" evidence="1">
        <dbReference type="Rhea" id="RHEA:67533"/>
    </physiologicalReaction>
</comment>
<comment type="catalytic activity">
    <reaction evidence="1">
        <text>(9Z,12Z)-octadecadienoyl-CoA + H2O = S-(9Z,12Z-octadecadienoyl)-4'-phosphopantetheine + adenosine 3',5'-bisphosphate + 2 H(+)</text>
        <dbReference type="Rhea" id="RHEA:67536"/>
        <dbReference type="ChEBI" id="CHEBI:15377"/>
        <dbReference type="ChEBI" id="CHEBI:15378"/>
        <dbReference type="ChEBI" id="CHEBI:57383"/>
        <dbReference type="ChEBI" id="CHEBI:58343"/>
        <dbReference type="ChEBI" id="CHEBI:172387"/>
    </reaction>
    <physiologicalReaction direction="left-to-right" evidence="1">
        <dbReference type="Rhea" id="RHEA:67537"/>
    </physiologicalReaction>
</comment>
<comment type="catalytic activity">
    <reaction evidence="1">
        <text>(9Z)-hexadecenoyl-CoA + H2O = S-(9Z-hexadecenoyl)-4'-phosphopantetheine + adenosine 3',5'-bisphosphate + 2 H(+)</text>
        <dbReference type="Rhea" id="RHEA:67540"/>
        <dbReference type="ChEBI" id="CHEBI:15377"/>
        <dbReference type="ChEBI" id="CHEBI:15378"/>
        <dbReference type="ChEBI" id="CHEBI:58343"/>
        <dbReference type="ChEBI" id="CHEBI:61540"/>
        <dbReference type="ChEBI" id="CHEBI:172388"/>
    </reaction>
    <physiologicalReaction direction="left-to-right" evidence="1">
        <dbReference type="Rhea" id="RHEA:67541"/>
    </physiologicalReaction>
</comment>
<comment type="catalytic activity">
    <reaction evidence="1">
        <text>(9Z)-tetradecenoyl-CoA + H2O = S-(9Z-tetradecenoyl)-4'-phosphopantetheine + adenosine 3',5'-bisphosphate + 2 H(+)</text>
        <dbReference type="Rhea" id="RHEA:67544"/>
        <dbReference type="ChEBI" id="CHEBI:15377"/>
        <dbReference type="ChEBI" id="CHEBI:15378"/>
        <dbReference type="ChEBI" id="CHEBI:58343"/>
        <dbReference type="ChEBI" id="CHEBI:65060"/>
        <dbReference type="ChEBI" id="CHEBI:172389"/>
    </reaction>
    <physiologicalReaction direction="left-to-right" evidence="1">
        <dbReference type="Rhea" id="RHEA:67545"/>
    </physiologicalReaction>
</comment>
<comment type="catalytic activity">
    <reaction evidence="1">
        <text>(6Z)-octenoyl-CoA + H2O = S-(6Z-octenoyl)-4'-phosphopantetheine + adenosine 3',5'-bisphosphate + 2 H(+)</text>
        <dbReference type="Rhea" id="RHEA:67528"/>
        <dbReference type="ChEBI" id="CHEBI:15377"/>
        <dbReference type="ChEBI" id="CHEBI:15378"/>
        <dbReference type="ChEBI" id="CHEBI:58343"/>
        <dbReference type="ChEBI" id="CHEBI:172383"/>
        <dbReference type="ChEBI" id="CHEBI:172384"/>
    </reaction>
    <physiologicalReaction direction="left-to-right" evidence="1">
        <dbReference type="Rhea" id="RHEA:67529"/>
    </physiologicalReaction>
</comment>
<comment type="catalytic activity">
    <reaction evidence="1">
        <text>hexadecanoyl-CoA + H2O = S-hexadecanoyl-4'-phosphopantetheine + adenosine 3',5'-bisphosphate + 2 H(+)</text>
        <dbReference type="Rhea" id="RHEA:50032"/>
        <dbReference type="ChEBI" id="CHEBI:15377"/>
        <dbReference type="ChEBI" id="CHEBI:15378"/>
        <dbReference type="ChEBI" id="CHEBI:57379"/>
        <dbReference type="ChEBI" id="CHEBI:58343"/>
        <dbReference type="ChEBI" id="CHEBI:132018"/>
    </reaction>
    <physiologicalReaction direction="left-to-right" evidence="1">
        <dbReference type="Rhea" id="RHEA:50033"/>
    </physiologicalReaction>
</comment>
<comment type="catalytic activity">
    <reaction evidence="1">
        <text>tetradecanoyl-CoA + H2O = tetradecanoyl-4'-phosphopantetheine + adenosine 3',5'-bisphosphate + 2 H(+)</text>
        <dbReference type="Rhea" id="RHEA:50028"/>
        <dbReference type="ChEBI" id="CHEBI:15377"/>
        <dbReference type="ChEBI" id="CHEBI:15378"/>
        <dbReference type="ChEBI" id="CHEBI:57385"/>
        <dbReference type="ChEBI" id="CHEBI:58343"/>
        <dbReference type="ChEBI" id="CHEBI:132017"/>
    </reaction>
    <physiologicalReaction direction="left-to-right" evidence="1">
        <dbReference type="Rhea" id="RHEA:50029"/>
    </physiologicalReaction>
</comment>
<comment type="catalytic activity">
    <reaction evidence="1">
        <text>dodecanoyl-CoA + H2O = S-dodecanoyl-4'-phosphopantetheine + adenosine 3',5'-bisphosphate + 2 H(+)</text>
        <dbReference type="Rhea" id="RHEA:50024"/>
        <dbReference type="ChEBI" id="CHEBI:15377"/>
        <dbReference type="ChEBI" id="CHEBI:15378"/>
        <dbReference type="ChEBI" id="CHEBI:57375"/>
        <dbReference type="ChEBI" id="CHEBI:58343"/>
        <dbReference type="ChEBI" id="CHEBI:132015"/>
    </reaction>
    <physiologicalReaction direction="left-to-right" evidence="1">
        <dbReference type="Rhea" id="RHEA:50025"/>
    </physiologicalReaction>
</comment>
<comment type="catalytic activity">
    <reaction evidence="1">
        <text>a 5'-end CoA-ribonucleoside in mRNA + H2O = a 5'-end phospho-adenosine-phospho-ribonucleoside in mRNA + (R)-4'-phosphopantetheine + 2 H(+)</text>
        <dbReference type="Rhea" id="RHEA:67592"/>
        <dbReference type="Rhea" id="RHEA-COMP:15719"/>
        <dbReference type="Rhea" id="RHEA-COMP:17276"/>
        <dbReference type="ChEBI" id="CHEBI:15377"/>
        <dbReference type="ChEBI" id="CHEBI:15378"/>
        <dbReference type="ChEBI" id="CHEBI:61723"/>
        <dbReference type="ChEBI" id="CHEBI:144051"/>
        <dbReference type="ChEBI" id="CHEBI:172371"/>
    </reaction>
    <physiologicalReaction direction="left-to-right" evidence="1">
        <dbReference type="Rhea" id="RHEA:67593"/>
    </physiologicalReaction>
</comment>
<comment type="cofactor">
    <cofactor evidence="1">
        <name>Mg(2+)</name>
        <dbReference type="ChEBI" id="CHEBI:18420"/>
    </cofactor>
    <cofactor evidence="1">
        <name>Mn(2+)</name>
        <dbReference type="ChEBI" id="CHEBI:29035"/>
    </cofactor>
</comment>
<comment type="subunit">
    <text evidence="1">Monomer.</text>
</comment>
<comment type="subcellular location">
    <subcellularLocation>
        <location evidence="1">Peroxisome</location>
    </subcellularLocation>
</comment>
<comment type="similarity">
    <text evidence="4">Belongs to the Nudix hydrolase family.</text>
</comment>
<accession>Q6AYD9</accession>
<protein>
    <recommendedName>
        <fullName>Acyl-coenzyme A diphosphatase NUDT19</fullName>
        <ecNumber>3.6.1.-</ecNumber>
        <ecNumber evidence="1">3.6.1.77</ecNumber>
    </recommendedName>
    <alternativeName>
        <fullName>Nucleoside diphosphate-linked moiety X motif 19</fullName>
        <shortName>Nudix motif 19</shortName>
    </alternativeName>
</protein>
<sequence>MSGPSSWRRAATVMLAAGWSHASPAGFRLLLLQRAQNQRFMPGAHVFPGGVLDAADSSPDWVSLFAPRHTPPRFGLGPEPPRQPSFPGLFHGDADGAALPDDVALRICAIRETFEEAGVLLLRPRDSARASQEPSIALSPPAGLADWRSRVRSDPRCFLQLCAHLDCTPDIWALHDWGGWLTPYGRSSRRFDTTFLLCCLRETPRVEPDLAEVVGYKWLSPSEATECFLSKEIWLAPPQFYEVRRLENFASLSALYRFCLDHPLEVPEKWLPIVLLTSDGSIHLLPGDELYVKGSDFLEKNMSIDKKTEEIVTEGKVVNRIVIHSPHLYEIYMTLTSKSEHGYPKSYTAKKSCTARL</sequence>